<proteinExistence type="inferred from homology"/>
<feature type="chain" id="PRO_0000292536" description="Putative manganese efflux pump MntP">
    <location>
        <begin position="1"/>
        <end position="181"/>
    </location>
</feature>
<feature type="transmembrane region" description="Helical" evidence="1">
    <location>
        <begin position="35"/>
        <end position="55"/>
    </location>
</feature>
<feature type="transmembrane region" description="Helical" evidence="1">
    <location>
        <begin position="59"/>
        <end position="79"/>
    </location>
</feature>
<feature type="transmembrane region" description="Helical" evidence="1">
    <location>
        <begin position="102"/>
        <end position="122"/>
    </location>
</feature>
<feature type="transmembrane region" description="Helical" evidence="1">
    <location>
        <begin position="126"/>
        <end position="146"/>
    </location>
</feature>
<feature type="transmembrane region" description="Helical" evidence="1">
    <location>
        <begin position="161"/>
        <end position="181"/>
    </location>
</feature>
<accession>Q0AJY9</accession>
<reference key="1">
    <citation type="journal article" date="2007" name="Environ. Microbiol.">
        <title>Whole-genome analysis of the ammonia-oxidizing bacterium, Nitrosomonas eutropha C91: implications for niche adaptation.</title>
        <authorList>
            <person name="Stein L.Y."/>
            <person name="Arp D.J."/>
            <person name="Berube P.M."/>
            <person name="Chain P.S."/>
            <person name="Hauser L."/>
            <person name="Jetten M.S."/>
            <person name="Klotz M.G."/>
            <person name="Larimer F.W."/>
            <person name="Norton J.M."/>
            <person name="Op den Camp H.J.M."/>
            <person name="Shin M."/>
            <person name="Wei X."/>
        </authorList>
    </citation>
    <scope>NUCLEOTIDE SEQUENCE [LARGE SCALE GENOMIC DNA]</scope>
    <source>
        <strain>DSM 101675 / C91 / Nm57</strain>
    </source>
</reference>
<organism>
    <name type="scientific">Nitrosomonas eutropha (strain DSM 101675 / C91 / Nm57)</name>
    <dbReference type="NCBI Taxonomy" id="335283"/>
    <lineage>
        <taxon>Bacteria</taxon>
        <taxon>Pseudomonadati</taxon>
        <taxon>Pseudomonadota</taxon>
        <taxon>Betaproteobacteria</taxon>
        <taxon>Nitrosomonadales</taxon>
        <taxon>Nitrosomonadaceae</taxon>
        <taxon>Nitrosomonas</taxon>
    </lineage>
</organism>
<keyword id="KW-0997">Cell inner membrane</keyword>
<keyword id="KW-1003">Cell membrane</keyword>
<keyword id="KW-0406">Ion transport</keyword>
<keyword id="KW-0464">Manganese</keyword>
<keyword id="KW-0472">Membrane</keyword>
<keyword id="KW-0812">Transmembrane</keyword>
<keyword id="KW-1133">Transmembrane helix</keyword>
<keyword id="KW-0813">Transport</keyword>
<evidence type="ECO:0000255" key="1">
    <source>
        <dbReference type="HAMAP-Rule" id="MF_01521"/>
    </source>
</evidence>
<protein>
    <recommendedName>
        <fullName evidence="1">Putative manganese efflux pump MntP</fullName>
    </recommendedName>
</protein>
<comment type="function">
    <text evidence="1">Probably functions as a manganese efflux pump.</text>
</comment>
<comment type="subcellular location">
    <subcellularLocation>
        <location evidence="1">Cell inner membrane</location>
        <topology evidence="1">Multi-pass membrane protein</topology>
    </subcellularLocation>
</comment>
<comment type="similarity">
    <text evidence="1">Belongs to the MntP (TC 9.B.29) family.</text>
</comment>
<gene>
    <name evidence="1" type="primary">mntP</name>
    <name type="ordered locus">Neut_0042</name>
</gene>
<name>MNTP_NITEC</name>
<dbReference type="EMBL" id="CP000450">
    <property type="protein sequence ID" value="ABI58332.1"/>
    <property type="molecule type" value="Genomic_DNA"/>
</dbReference>
<dbReference type="KEGG" id="net:Neut_0042"/>
<dbReference type="eggNOG" id="COG1971">
    <property type="taxonomic scope" value="Bacteria"/>
</dbReference>
<dbReference type="HOGENOM" id="CLU_096410_0_0_4"/>
<dbReference type="Proteomes" id="UP000001966">
    <property type="component" value="Chromosome"/>
</dbReference>
<dbReference type="GO" id="GO:0005886">
    <property type="term" value="C:plasma membrane"/>
    <property type="evidence" value="ECO:0007669"/>
    <property type="project" value="UniProtKB-SubCell"/>
</dbReference>
<dbReference type="GO" id="GO:0005384">
    <property type="term" value="F:manganese ion transmembrane transporter activity"/>
    <property type="evidence" value="ECO:0007669"/>
    <property type="project" value="UniProtKB-UniRule"/>
</dbReference>
<dbReference type="HAMAP" id="MF_01521">
    <property type="entry name" value="MntP_pump"/>
    <property type="match status" value="1"/>
</dbReference>
<dbReference type="InterPro" id="IPR003810">
    <property type="entry name" value="Mntp/YtaF"/>
</dbReference>
<dbReference type="InterPro" id="IPR022929">
    <property type="entry name" value="Put_MntP"/>
</dbReference>
<dbReference type="NCBIfam" id="NF008546">
    <property type="entry name" value="PRK11469.1"/>
    <property type="match status" value="1"/>
</dbReference>
<dbReference type="PANTHER" id="PTHR35529">
    <property type="entry name" value="MANGANESE EFFLUX PUMP MNTP-RELATED"/>
    <property type="match status" value="1"/>
</dbReference>
<dbReference type="PANTHER" id="PTHR35529:SF1">
    <property type="entry name" value="MANGANESE EFFLUX PUMP MNTP-RELATED"/>
    <property type="match status" value="1"/>
</dbReference>
<dbReference type="Pfam" id="PF02659">
    <property type="entry name" value="Mntp"/>
    <property type="match status" value="1"/>
</dbReference>
<sequence length="181" mass="18871">MILALAMSTDAFAAAVGKGTALRNPRLSEALRTGIIFGVIEGLTPLVGWALGSIAADSVADWDHWIAFTLLLILGLLMIRAGLRAEEPEATPAIRHSFWLLAATGFATSIDAMAVGVSLAFIDNNILITAAAIGLATFLMVTLGVMVGRLIGNVAGKWAEILGGLALMGVGTVILYEHLTM</sequence>